<protein>
    <recommendedName>
        <fullName evidence="1">Protein SprT</fullName>
    </recommendedName>
</protein>
<comment type="cofactor">
    <cofactor evidence="1">
        <name>Zn(2+)</name>
        <dbReference type="ChEBI" id="CHEBI:29105"/>
    </cofactor>
    <text evidence="1">Binds 1 zinc ion.</text>
</comment>
<comment type="subcellular location">
    <subcellularLocation>
        <location evidence="1">Cytoplasm</location>
    </subcellularLocation>
</comment>
<comment type="similarity">
    <text evidence="1">Belongs to the SprT family.</text>
</comment>
<name>SPRT_YERP3</name>
<dbReference type="EMBL" id="CP000720">
    <property type="protein sequence ID" value="ABS47739.1"/>
    <property type="molecule type" value="Genomic_DNA"/>
</dbReference>
<dbReference type="RefSeq" id="WP_012104670.1">
    <property type="nucleotide sequence ID" value="NC_009708.1"/>
</dbReference>
<dbReference type="KEGG" id="ypi:YpsIP31758_0840"/>
<dbReference type="HOGENOM" id="CLU_113336_0_1_6"/>
<dbReference type="Proteomes" id="UP000002412">
    <property type="component" value="Chromosome"/>
</dbReference>
<dbReference type="GO" id="GO:0005737">
    <property type="term" value="C:cytoplasm"/>
    <property type="evidence" value="ECO:0007669"/>
    <property type="project" value="UniProtKB-SubCell"/>
</dbReference>
<dbReference type="GO" id="GO:0008270">
    <property type="term" value="F:zinc ion binding"/>
    <property type="evidence" value="ECO:0007669"/>
    <property type="project" value="UniProtKB-UniRule"/>
</dbReference>
<dbReference type="GO" id="GO:0006950">
    <property type="term" value="P:response to stress"/>
    <property type="evidence" value="ECO:0007669"/>
    <property type="project" value="UniProtKB-ARBA"/>
</dbReference>
<dbReference type="Gene3D" id="3.30.2010.10">
    <property type="entry name" value="Metalloproteases ('zincins'), catalytic domain"/>
    <property type="match status" value="1"/>
</dbReference>
<dbReference type="HAMAP" id="MF_00746">
    <property type="entry name" value="SprT"/>
    <property type="match status" value="1"/>
</dbReference>
<dbReference type="InterPro" id="IPR006640">
    <property type="entry name" value="SprT-like_domain"/>
</dbReference>
<dbReference type="InterPro" id="IPR035240">
    <property type="entry name" value="SprT_Zn_ribbon"/>
</dbReference>
<dbReference type="InterPro" id="IPR023483">
    <property type="entry name" value="Uncharacterised_SprT"/>
</dbReference>
<dbReference type="NCBIfam" id="NF003421">
    <property type="entry name" value="PRK04860.1"/>
    <property type="match status" value="1"/>
</dbReference>
<dbReference type="PANTHER" id="PTHR38773">
    <property type="entry name" value="PROTEIN SPRT"/>
    <property type="match status" value="1"/>
</dbReference>
<dbReference type="PANTHER" id="PTHR38773:SF1">
    <property type="entry name" value="PROTEIN SPRT"/>
    <property type="match status" value="1"/>
</dbReference>
<dbReference type="Pfam" id="PF10263">
    <property type="entry name" value="SprT-like"/>
    <property type="match status" value="1"/>
</dbReference>
<dbReference type="Pfam" id="PF17283">
    <property type="entry name" value="Zn_ribbon_SprT"/>
    <property type="match status" value="1"/>
</dbReference>
<dbReference type="SMART" id="SM00731">
    <property type="entry name" value="SprT"/>
    <property type="match status" value="1"/>
</dbReference>
<dbReference type="PROSITE" id="PS00142">
    <property type="entry name" value="ZINC_PROTEASE"/>
    <property type="match status" value="1"/>
</dbReference>
<gene>
    <name evidence="1" type="primary">sprT</name>
    <name type="ordered locus">YpsIP31758_0840</name>
</gene>
<proteinExistence type="inferred from homology"/>
<feature type="chain" id="PRO_1000062179" description="Protein SprT">
    <location>
        <begin position="1"/>
        <end position="170"/>
    </location>
</feature>
<feature type="domain" description="SprT-like" evidence="1">
    <location>
        <begin position="22"/>
        <end position="165"/>
    </location>
</feature>
<feature type="active site" evidence="1">
    <location>
        <position position="79"/>
    </location>
</feature>
<feature type="binding site" evidence="1">
    <location>
        <position position="78"/>
    </location>
    <ligand>
        <name>Zn(2+)</name>
        <dbReference type="ChEBI" id="CHEBI:29105"/>
    </ligand>
</feature>
<feature type="binding site" evidence="1">
    <location>
        <position position="82"/>
    </location>
    <ligand>
        <name>Zn(2+)</name>
        <dbReference type="ChEBI" id="CHEBI:29105"/>
    </ligand>
</feature>
<keyword id="KW-0963">Cytoplasm</keyword>
<keyword id="KW-0479">Metal-binding</keyword>
<keyword id="KW-0862">Zinc</keyword>
<reference key="1">
    <citation type="journal article" date="2007" name="PLoS Genet.">
        <title>The complete genome sequence of Yersinia pseudotuberculosis IP31758, the causative agent of Far East scarlet-like fever.</title>
        <authorList>
            <person name="Eppinger M."/>
            <person name="Rosovitz M.J."/>
            <person name="Fricke W.F."/>
            <person name="Rasko D.A."/>
            <person name="Kokorina G."/>
            <person name="Fayolle C."/>
            <person name="Lindler L.E."/>
            <person name="Carniel E."/>
            <person name="Ravel J."/>
        </authorList>
    </citation>
    <scope>NUCLEOTIDE SEQUENCE [LARGE SCALE GENOMIC DNA]</scope>
    <source>
        <strain>IP 31758</strain>
    </source>
</reference>
<accession>A7FEZ6</accession>
<sequence length="170" mass="19921">MSTLRIPIALQQAVMQCLRHYLQLANQHLGTAYPEPKINYHQRGTNAGSAYLQSFEIRLNPVLLLENKQPFIDEVVPHELAHLLVYRQFGRVAPHGKEWRWMMEQVLKVPASRTHQFEVASVRSKTFNYQCKCQQHALTIRRHNKVLRGESEYRCRQCGEKLQFITINPD</sequence>
<evidence type="ECO:0000255" key="1">
    <source>
        <dbReference type="HAMAP-Rule" id="MF_00746"/>
    </source>
</evidence>
<organism>
    <name type="scientific">Yersinia pseudotuberculosis serotype O:1b (strain IP 31758)</name>
    <dbReference type="NCBI Taxonomy" id="349747"/>
    <lineage>
        <taxon>Bacteria</taxon>
        <taxon>Pseudomonadati</taxon>
        <taxon>Pseudomonadota</taxon>
        <taxon>Gammaproteobacteria</taxon>
        <taxon>Enterobacterales</taxon>
        <taxon>Yersiniaceae</taxon>
        <taxon>Yersinia</taxon>
    </lineage>
</organism>